<accession>A7FUL1</accession>
<dbReference type="EC" id="2.8.4.3" evidence="1"/>
<dbReference type="EMBL" id="CP000726">
    <property type="protein sequence ID" value="ABS34588.1"/>
    <property type="molecule type" value="Genomic_DNA"/>
</dbReference>
<dbReference type="RefSeq" id="WP_011986381.1">
    <property type="nucleotide sequence ID" value="NC_009697.1"/>
</dbReference>
<dbReference type="SMR" id="A7FUL1"/>
<dbReference type="GeneID" id="5186056"/>
<dbReference type="KEGG" id="cba:CLB_1736"/>
<dbReference type="HOGENOM" id="CLU_018697_2_0_9"/>
<dbReference type="GO" id="GO:0005829">
    <property type="term" value="C:cytosol"/>
    <property type="evidence" value="ECO:0007669"/>
    <property type="project" value="TreeGrafter"/>
</dbReference>
<dbReference type="GO" id="GO:0051539">
    <property type="term" value="F:4 iron, 4 sulfur cluster binding"/>
    <property type="evidence" value="ECO:0007669"/>
    <property type="project" value="UniProtKB-UniRule"/>
</dbReference>
<dbReference type="GO" id="GO:0046872">
    <property type="term" value="F:metal ion binding"/>
    <property type="evidence" value="ECO:0007669"/>
    <property type="project" value="UniProtKB-KW"/>
</dbReference>
<dbReference type="GO" id="GO:0035597">
    <property type="term" value="F:N6-isopentenyladenosine methylthiotransferase activity"/>
    <property type="evidence" value="ECO:0007669"/>
    <property type="project" value="TreeGrafter"/>
</dbReference>
<dbReference type="CDD" id="cd01335">
    <property type="entry name" value="Radical_SAM"/>
    <property type="match status" value="1"/>
</dbReference>
<dbReference type="FunFam" id="3.40.50.12160:FF:000006">
    <property type="entry name" value="tRNA-2-methylthio-N(6)-dimethylallyladenosine synthase"/>
    <property type="match status" value="1"/>
</dbReference>
<dbReference type="FunFam" id="3.80.30.20:FF:000001">
    <property type="entry name" value="tRNA-2-methylthio-N(6)-dimethylallyladenosine synthase 2"/>
    <property type="match status" value="1"/>
</dbReference>
<dbReference type="Gene3D" id="3.40.50.12160">
    <property type="entry name" value="Methylthiotransferase, N-terminal domain"/>
    <property type="match status" value="1"/>
</dbReference>
<dbReference type="Gene3D" id="3.80.30.20">
    <property type="entry name" value="tm_1862 like domain"/>
    <property type="match status" value="1"/>
</dbReference>
<dbReference type="HAMAP" id="MF_01864">
    <property type="entry name" value="tRNA_metthiotr_MiaB"/>
    <property type="match status" value="1"/>
</dbReference>
<dbReference type="InterPro" id="IPR006638">
    <property type="entry name" value="Elp3/MiaA/NifB-like_rSAM"/>
</dbReference>
<dbReference type="InterPro" id="IPR005839">
    <property type="entry name" value="Methylthiotransferase"/>
</dbReference>
<dbReference type="InterPro" id="IPR020612">
    <property type="entry name" value="Methylthiotransferase_CS"/>
</dbReference>
<dbReference type="InterPro" id="IPR013848">
    <property type="entry name" value="Methylthiotransferase_N"/>
</dbReference>
<dbReference type="InterPro" id="IPR038135">
    <property type="entry name" value="Methylthiotransferase_N_sf"/>
</dbReference>
<dbReference type="InterPro" id="IPR006463">
    <property type="entry name" value="MiaB_methiolase"/>
</dbReference>
<dbReference type="InterPro" id="IPR007197">
    <property type="entry name" value="rSAM"/>
</dbReference>
<dbReference type="InterPro" id="IPR023404">
    <property type="entry name" value="rSAM_horseshoe"/>
</dbReference>
<dbReference type="InterPro" id="IPR002792">
    <property type="entry name" value="TRAM_dom"/>
</dbReference>
<dbReference type="NCBIfam" id="TIGR01574">
    <property type="entry name" value="miaB-methiolase"/>
    <property type="match status" value="1"/>
</dbReference>
<dbReference type="NCBIfam" id="TIGR00089">
    <property type="entry name" value="MiaB/RimO family radical SAM methylthiotransferase"/>
    <property type="match status" value="1"/>
</dbReference>
<dbReference type="PANTHER" id="PTHR43020">
    <property type="entry name" value="CDK5 REGULATORY SUBUNIT-ASSOCIATED PROTEIN 1"/>
    <property type="match status" value="1"/>
</dbReference>
<dbReference type="PANTHER" id="PTHR43020:SF2">
    <property type="entry name" value="MITOCHONDRIAL TRNA METHYLTHIOTRANSFERASE CDK5RAP1"/>
    <property type="match status" value="1"/>
</dbReference>
<dbReference type="Pfam" id="PF04055">
    <property type="entry name" value="Radical_SAM"/>
    <property type="match status" value="1"/>
</dbReference>
<dbReference type="Pfam" id="PF01938">
    <property type="entry name" value="TRAM"/>
    <property type="match status" value="1"/>
</dbReference>
<dbReference type="Pfam" id="PF00919">
    <property type="entry name" value="UPF0004"/>
    <property type="match status" value="1"/>
</dbReference>
<dbReference type="SFLD" id="SFLDF00273">
    <property type="entry name" value="(dimethylallyl)adenosine_tRNA"/>
    <property type="match status" value="1"/>
</dbReference>
<dbReference type="SFLD" id="SFLDG01082">
    <property type="entry name" value="B12-binding_domain_containing"/>
    <property type="match status" value="1"/>
</dbReference>
<dbReference type="SFLD" id="SFLDS00029">
    <property type="entry name" value="Radical_SAM"/>
    <property type="match status" value="1"/>
</dbReference>
<dbReference type="SMART" id="SM00729">
    <property type="entry name" value="Elp3"/>
    <property type="match status" value="1"/>
</dbReference>
<dbReference type="SUPFAM" id="SSF102114">
    <property type="entry name" value="Radical SAM enzymes"/>
    <property type="match status" value="1"/>
</dbReference>
<dbReference type="PROSITE" id="PS51449">
    <property type="entry name" value="MTTASE_N"/>
    <property type="match status" value="1"/>
</dbReference>
<dbReference type="PROSITE" id="PS01278">
    <property type="entry name" value="MTTASE_RADICAL"/>
    <property type="match status" value="1"/>
</dbReference>
<dbReference type="PROSITE" id="PS51918">
    <property type="entry name" value="RADICAL_SAM"/>
    <property type="match status" value="1"/>
</dbReference>
<dbReference type="PROSITE" id="PS50926">
    <property type="entry name" value="TRAM"/>
    <property type="match status" value="1"/>
</dbReference>
<evidence type="ECO:0000255" key="1">
    <source>
        <dbReference type="HAMAP-Rule" id="MF_01864"/>
    </source>
</evidence>
<evidence type="ECO:0000255" key="2">
    <source>
        <dbReference type="PROSITE-ProRule" id="PRU01266"/>
    </source>
</evidence>
<gene>
    <name evidence="1" type="primary">miaB</name>
    <name type="ordered locus">CLB_1736</name>
</gene>
<organism>
    <name type="scientific">Clostridium botulinum (strain ATCC 19397 / Type A)</name>
    <dbReference type="NCBI Taxonomy" id="441770"/>
    <lineage>
        <taxon>Bacteria</taxon>
        <taxon>Bacillati</taxon>
        <taxon>Bacillota</taxon>
        <taxon>Clostridia</taxon>
        <taxon>Eubacteriales</taxon>
        <taxon>Clostridiaceae</taxon>
        <taxon>Clostridium</taxon>
    </lineage>
</organism>
<reference key="1">
    <citation type="journal article" date="2007" name="PLoS ONE">
        <title>Analysis of the neurotoxin complex genes in Clostridium botulinum A1-A4 and B1 strains: BoNT/A3, /Ba4 and /B1 clusters are located within plasmids.</title>
        <authorList>
            <person name="Smith T.J."/>
            <person name="Hill K.K."/>
            <person name="Foley B.T."/>
            <person name="Detter J.C."/>
            <person name="Munk A.C."/>
            <person name="Bruce D.C."/>
            <person name="Doggett N.A."/>
            <person name="Smith L.A."/>
            <person name="Marks J.D."/>
            <person name="Xie G."/>
            <person name="Brettin T.S."/>
        </authorList>
    </citation>
    <scope>NUCLEOTIDE SEQUENCE [LARGE SCALE GENOMIC DNA]</scope>
    <source>
        <strain>ATCC 19397 / Type A</strain>
    </source>
</reference>
<protein>
    <recommendedName>
        <fullName evidence="1">tRNA-2-methylthio-N(6)-dimethylallyladenosine synthase</fullName>
        <ecNumber evidence="1">2.8.4.3</ecNumber>
    </recommendedName>
    <alternativeName>
        <fullName evidence="1">(Dimethylallyl)adenosine tRNA methylthiotransferase MiaB</fullName>
    </alternativeName>
    <alternativeName>
        <fullName evidence="1">tRNA-i(6)A37 methylthiotransferase</fullName>
    </alternativeName>
</protein>
<name>MIAB_CLOB1</name>
<proteinExistence type="inferred from homology"/>
<feature type="chain" id="PRO_0000374222" description="tRNA-2-methylthio-N(6)-dimethylallyladenosine synthase">
    <location>
        <begin position="1"/>
        <end position="450"/>
    </location>
</feature>
<feature type="domain" description="MTTase N-terminal" evidence="1">
    <location>
        <begin position="14"/>
        <end position="132"/>
    </location>
</feature>
<feature type="domain" description="Radical SAM core" evidence="2">
    <location>
        <begin position="155"/>
        <end position="385"/>
    </location>
</feature>
<feature type="domain" description="TRAM" evidence="1">
    <location>
        <begin position="388"/>
        <end position="450"/>
    </location>
</feature>
<feature type="binding site" evidence="1">
    <location>
        <position position="23"/>
    </location>
    <ligand>
        <name>[4Fe-4S] cluster</name>
        <dbReference type="ChEBI" id="CHEBI:49883"/>
        <label>1</label>
    </ligand>
</feature>
<feature type="binding site" evidence="1">
    <location>
        <position position="59"/>
    </location>
    <ligand>
        <name>[4Fe-4S] cluster</name>
        <dbReference type="ChEBI" id="CHEBI:49883"/>
        <label>1</label>
    </ligand>
</feature>
<feature type="binding site" evidence="1">
    <location>
        <position position="93"/>
    </location>
    <ligand>
        <name>[4Fe-4S] cluster</name>
        <dbReference type="ChEBI" id="CHEBI:49883"/>
        <label>1</label>
    </ligand>
</feature>
<feature type="binding site" evidence="1">
    <location>
        <position position="169"/>
    </location>
    <ligand>
        <name>[4Fe-4S] cluster</name>
        <dbReference type="ChEBI" id="CHEBI:49883"/>
        <label>2</label>
        <note>4Fe-4S-S-AdoMet</note>
    </ligand>
</feature>
<feature type="binding site" evidence="1">
    <location>
        <position position="173"/>
    </location>
    <ligand>
        <name>[4Fe-4S] cluster</name>
        <dbReference type="ChEBI" id="CHEBI:49883"/>
        <label>2</label>
        <note>4Fe-4S-S-AdoMet</note>
    </ligand>
</feature>
<feature type="binding site" evidence="1">
    <location>
        <position position="176"/>
    </location>
    <ligand>
        <name>[4Fe-4S] cluster</name>
        <dbReference type="ChEBI" id="CHEBI:49883"/>
        <label>2</label>
        <note>4Fe-4S-S-AdoMet</note>
    </ligand>
</feature>
<keyword id="KW-0004">4Fe-4S</keyword>
<keyword id="KW-0963">Cytoplasm</keyword>
<keyword id="KW-0408">Iron</keyword>
<keyword id="KW-0411">Iron-sulfur</keyword>
<keyword id="KW-0479">Metal-binding</keyword>
<keyword id="KW-0949">S-adenosyl-L-methionine</keyword>
<keyword id="KW-0808">Transferase</keyword>
<keyword id="KW-0819">tRNA processing</keyword>
<comment type="function">
    <text evidence="1">Catalyzes the methylthiolation of N6-(dimethylallyl)adenosine (i(6)A), leading to the formation of 2-methylthio-N6-(dimethylallyl)adenosine (ms(2)i(6)A) at position 37 in tRNAs that read codons beginning with uridine.</text>
</comment>
<comment type="catalytic activity">
    <reaction evidence="1">
        <text>N(6)-dimethylallyladenosine(37) in tRNA + (sulfur carrier)-SH + AH2 + 2 S-adenosyl-L-methionine = 2-methylsulfanyl-N(6)-dimethylallyladenosine(37) in tRNA + (sulfur carrier)-H + 5'-deoxyadenosine + L-methionine + A + S-adenosyl-L-homocysteine + 2 H(+)</text>
        <dbReference type="Rhea" id="RHEA:37067"/>
        <dbReference type="Rhea" id="RHEA-COMP:10375"/>
        <dbReference type="Rhea" id="RHEA-COMP:10376"/>
        <dbReference type="Rhea" id="RHEA-COMP:14737"/>
        <dbReference type="Rhea" id="RHEA-COMP:14739"/>
        <dbReference type="ChEBI" id="CHEBI:13193"/>
        <dbReference type="ChEBI" id="CHEBI:15378"/>
        <dbReference type="ChEBI" id="CHEBI:17319"/>
        <dbReference type="ChEBI" id="CHEBI:17499"/>
        <dbReference type="ChEBI" id="CHEBI:29917"/>
        <dbReference type="ChEBI" id="CHEBI:57844"/>
        <dbReference type="ChEBI" id="CHEBI:57856"/>
        <dbReference type="ChEBI" id="CHEBI:59789"/>
        <dbReference type="ChEBI" id="CHEBI:64428"/>
        <dbReference type="ChEBI" id="CHEBI:74415"/>
        <dbReference type="ChEBI" id="CHEBI:74417"/>
        <dbReference type="EC" id="2.8.4.3"/>
    </reaction>
</comment>
<comment type="cofactor">
    <cofactor evidence="1">
        <name>[4Fe-4S] cluster</name>
        <dbReference type="ChEBI" id="CHEBI:49883"/>
    </cofactor>
    <text evidence="1">Binds 2 [4Fe-4S] clusters. One cluster is coordinated with 3 cysteines and an exchangeable S-adenosyl-L-methionine.</text>
</comment>
<comment type="subunit">
    <text evidence="1">Monomer.</text>
</comment>
<comment type="subcellular location">
    <subcellularLocation>
        <location evidence="1">Cytoplasm</location>
    </subcellularLocation>
</comment>
<comment type="similarity">
    <text evidence="1">Belongs to the methylthiotransferase family. MiaB subfamily.</text>
</comment>
<sequence>MNEILNTKDINVIGEFFIETWGCQMNEEDSEKLSGMLKKEGYIRTEERENADVIIFNTCCVRENAELKVYGNLGILKGLKSKNPNLIIAVTGCMMQQKGMAETIKKKFPFVDIIIGTHNLHNFPNYLNEVKKKDTSVLKIQEKENSIIENMPIDRKNSMKAFVTIMYGCNNFCTYCIVPYVRGRERSRTPENIEAEIKKLISEGYKEITLLGQNVNSYGKDLEPNVTFAELLKRVNNIEGLERVRFMTSHPKDLTDDVIEAIAKCDKLCEQIHLPVQSGSSEILKKMNRHYDREKYLDVVSKIKKLIPNVALSTDIIVGFPGETEKDFEETLSLVKEVEYDSAFTFLYSIRKGTPAAKFEDQVPEDVKHKRFNRLVEVLNEISAKKNKAYEGKIEEVLVEGTSKNDENKLMGRTRTGKLVNFIGDKDSIGELVNVKIIKANSFSLTGEEI</sequence>